<accession>Q9DAM1</accession>
<accession>A0AUN5</accession>
<accession>Q14B04</accession>
<reference key="1">
    <citation type="journal article" date="2014" name="Mol. Biol. Rep.">
        <title>Expression and identification of a novel gene Spata34 in mouse spermatogenic cells.</title>
        <authorList>
            <person name="Chen T."/>
            <person name="Jiang Z."/>
            <person name="Xu W."/>
            <person name="Wang Y."/>
            <person name="Li Y."/>
            <person name="Wan Y."/>
            <person name="Yuan W."/>
            <person name="Mo X."/>
            <person name="Wu X."/>
            <person name="Deng Y."/>
            <person name="Fan X."/>
            <person name="Nie D."/>
        </authorList>
    </citation>
    <scope>NUCLEOTIDE SEQUENCE [MRNA]</scope>
    <scope>SUBCELLULAR LOCATION</scope>
    <scope>TISSUE SPECIFICITY</scope>
    <scope>DEVELOPMENTAL STAGE</scope>
    <source>
        <strain evidence="4">BALB/cJ</strain>
        <tissue evidence="4">Testis</tissue>
    </source>
</reference>
<reference key="2">
    <citation type="journal article" date="2005" name="Science">
        <title>The transcriptional landscape of the mammalian genome.</title>
        <authorList>
            <person name="Carninci P."/>
            <person name="Kasukawa T."/>
            <person name="Katayama S."/>
            <person name="Gough J."/>
            <person name="Frith M.C."/>
            <person name="Maeda N."/>
            <person name="Oyama R."/>
            <person name="Ravasi T."/>
            <person name="Lenhard B."/>
            <person name="Wells C."/>
            <person name="Kodzius R."/>
            <person name="Shimokawa K."/>
            <person name="Bajic V.B."/>
            <person name="Brenner S.E."/>
            <person name="Batalov S."/>
            <person name="Forrest A.R."/>
            <person name="Zavolan M."/>
            <person name="Davis M.J."/>
            <person name="Wilming L.G."/>
            <person name="Aidinis V."/>
            <person name="Allen J.E."/>
            <person name="Ambesi-Impiombato A."/>
            <person name="Apweiler R."/>
            <person name="Aturaliya R.N."/>
            <person name="Bailey T.L."/>
            <person name="Bansal M."/>
            <person name="Baxter L."/>
            <person name="Beisel K.W."/>
            <person name="Bersano T."/>
            <person name="Bono H."/>
            <person name="Chalk A.M."/>
            <person name="Chiu K.P."/>
            <person name="Choudhary V."/>
            <person name="Christoffels A."/>
            <person name="Clutterbuck D.R."/>
            <person name="Crowe M.L."/>
            <person name="Dalla E."/>
            <person name="Dalrymple B.P."/>
            <person name="de Bono B."/>
            <person name="Della Gatta G."/>
            <person name="di Bernardo D."/>
            <person name="Down T."/>
            <person name="Engstrom P."/>
            <person name="Fagiolini M."/>
            <person name="Faulkner G."/>
            <person name="Fletcher C.F."/>
            <person name="Fukushima T."/>
            <person name="Furuno M."/>
            <person name="Futaki S."/>
            <person name="Gariboldi M."/>
            <person name="Georgii-Hemming P."/>
            <person name="Gingeras T.R."/>
            <person name="Gojobori T."/>
            <person name="Green R.E."/>
            <person name="Gustincich S."/>
            <person name="Harbers M."/>
            <person name="Hayashi Y."/>
            <person name="Hensch T.K."/>
            <person name="Hirokawa N."/>
            <person name="Hill D."/>
            <person name="Huminiecki L."/>
            <person name="Iacono M."/>
            <person name="Ikeo K."/>
            <person name="Iwama A."/>
            <person name="Ishikawa T."/>
            <person name="Jakt M."/>
            <person name="Kanapin A."/>
            <person name="Katoh M."/>
            <person name="Kawasawa Y."/>
            <person name="Kelso J."/>
            <person name="Kitamura H."/>
            <person name="Kitano H."/>
            <person name="Kollias G."/>
            <person name="Krishnan S.P."/>
            <person name="Kruger A."/>
            <person name="Kummerfeld S.K."/>
            <person name="Kurochkin I.V."/>
            <person name="Lareau L.F."/>
            <person name="Lazarevic D."/>
            <person name="Lipovich L."/>
            <person name="Liu J."/>
            <person name="Liuni S."/>
            <person name="McWilliam S."/>
            <person name="Madan Babu M."/>
            <person name="Madera M."/>
            <person name="Marchionni L."/>
            <person name="Matsuda H."/>
            <person name="Matsuzawa S."/>
            <person name="Miki H."/>
            <person name="Mignone F."/>
            <person name="Miyake S."/>
            <person name="Morris K."/>
            <person name="Mottagui-Tabar S."/>
            <person name="Mulder N."/>
            <person name="Nakano N."/>
            <person name="Nakauchi H."/>
            <person name="Ng P."/>
            <person name="Nilsson R."/>
            <person name="Nishiguchi S."/>
            <person name="Nishikawa S."/>
            <person name="Nori F."/>
            <person name="Ohara O."/>
            <person name="Okazaki Y."/>
            <person name="Orlando V."/>
            <person name="Pang K.C."/>
            <person name="Pavan W.J."/>
            <person name="Pavesi G."/>
            <person name="Pesole G."/>
            <person name="Petrovsky N."/>
            <person name="Piazza S."/>
            <person name="Reed J."/>
            <person name="Reid J.F."/>
            <person name="Ring B.Z."/>
            <person name="Ringwald M."/>
            <person name="Rost B."/>
            <person name="Ruan Y."/>
            <person name="Salzberg S.L."/>
            <person name="Sandelin A."/>
            <person name="Schneider C."/>
            <person name="Schoenbach C."/>
            <person name="Sekiguchi K."/>
            <person name="Semple C.A."/>
            <person name="Seno S."/>
            <person name="Sessa L."/>
            <person name="Sheng Y."/>
            <person name="Shibata Y."/>
            <person name="Shimada H."/>
            <person name="Shimada K."/>
            <person name="Silva D."/>
            <person name="Sinclair B."/>
            <person name="Sperling S."/>
            <person name="Stupka E."/>
            <person name="Sugiura K."/>
            <person name="Sultana R."/>
            <person name="Takenaka Y."/>
            <person name="Taki K."/>
            <person name="Tammoja K."/>
            <person name="Tan S.L."/>
            <person name="Tang S."/>
            <person name="Taylor M.S."/>
            <person name="Tegner J."/>
            <person name="Teichmann S.A."/>
            <person name="Ueda H.R."/>
            <person name="van Nimwegen E."/>
            <person name="Verardo R."/>
            <person name="Wei C.L."/>
            <person name="Yagi K."/>
            <person name="Yamanishi H."/>
            <person name="Zabarovsky E."/>
            <person name="Zhu S."/>
            <person name="Zimmer A."/>
            <person name="Hide W."/>
            <person name="Bult C."/>
            <person name="Grimmond S.M."/>
            <person name="Teasdale R.D."/>
            <person name="Liu E.T."/>
            <person name="Brusic V."/>
            <person name="Quackenbush J."/>
            <person name="Wahlestedt C."/>
            <person name="Mattick J.S."/>
            <person name="Hume D.A."/>
            <person name="Kai C."/>
            <person name="Sasaki D."/>
            <person name="Tomaru Y."/>
            <person name="Fukuda S."/>
            <person name="Kanamori-Katayama M."/>
            <person name="Suzuki M."/>
            <person name="Aoki J."/>
            <person name="Arakawa T."/>
            <person name="Iida J."/>
            <person name="Imamura K."/>
            <person name="Itoh M."/>
            <person name="Kato T."/>
            <person name="Kawaji H."/>
            <person name="Kawagashira N."/>
            <person name="Kawashima T."/>
            <person name="Kojima M."/>
            <person name="Kondo S."/>
            <person name="Konno H."/>
            <person name="Nakano K."/>
            <person name="Ninomiya N."/>
            <person name="Nishio T."/>
            <person name="Okada M."/>
            <person name="Plessy C."/>
            <person name="Shibata K."/>
            <person name="Shiraki T."/>
            <person name="Suzuki S."/>
            <person name="Tagami M."/>
            <person name="Waki K."/>
            <person name="Watahiki A."/>
            <person name="Okamura-Oho Y."/>
            <person name="Suzuki H."/>
            <person name="Kawai J."/>
            <person name="Hayashizaki Y."/>
        </authorList>
    </citation>
    <scope>NUCLEOTIDE SEQUENCE [LARGE SCALE MRNA]</scope>
    <source>
        <strain>C57BL/6J</strain>
        <tissue>Testis</tissue>
    </source>
</reference>
<reference key="3">
    <citation type="submission" date="2005-07" db="EMBL/GenBank/DDBJ databases">
        <authorList>
            <person name="Mural R.J."/>
            <person name="Adams M.D."/>
            <person name="Myers E.W."/>
            <person name="Smith H.O."/>
            <person name="Venter J.C."/>
        </authorList>
    </citation>
    <scope>NUCLEOTIDE SEQUENCE [LARGE SCALE GENOMIC DNA]</scope>
</reference>
<reference key="4">
    <citation type="journal article" date="2004" name="Genome Res.">
        <title>The status, quality, and expansion of the NIH full-length cDNA project: the Mammalian Gene Collection (MGC).</title>
        <authorList>
            <consortium name="The MGC Project Team"/>
        </authorList>
    </citation>
    <scope>NUCLEOTIDE SEQUENCE [LARGE SCALE MRNA]</scope>
    <source>
        <tissue>Testis</tissue>
    </source>
</reference>
<reference key="5">
    <citation type="journal article" date="2010" name="Cell">
        <title>A tissue-specific atlas of mouse protein phosphorylation and expression.</title>
        <authorList>
            <person name="Huttlin E.L."/>
            <person name="Jedrychowski M.P."/>
            <person name="Elias J.E."/>
            <person name="Goswami T."/>
            <person name="Rad R."/>
            <person name="Beausoleil S.A."/>
            <person name="Villen J."/>
            <person name="Haas W."/>
            <person name="Sowa M.E."/>
            <person name="Gygi S.P."/>
        </authorList>
    </citation>
    <scope>IDENTIFICATION BY MASS SPECTROMETRY [LARGE SCALE ANALYSIS]</scope>
    <source>
        <tissue>Testis</tissue>
    </source>
</reference>
<reference key="6">
    <citation type="journal article" date="2014" name="Stem Cells Dev.">
        <title>Lrrc34, a novel nucleolar protein, interacts with npm1 and ncl and has an impact on pluripotent stem cells.</title>
        <authorList>
            <person name="Luehrig S."/>
            <person name="Siamishi I."/>
            <person name="Tesmer-Wolf M."/>
            <person name="Zechner U."/>
            <person name="Engel W."/>
            <person name="Nolte J."/>
        </authorList>
    </citation>
    <scope>FUNCTION</scope>
    <scope>INTERACTION WITH NPM1 AND NCL</scope>
    <scope>SUBCELLULAR LOCATION</scope>
    <scope>TISSUE SPECIFICITY</scope>
    <scope>DEVELOPMENTAL STAGE</scope>
</reference>
<gene>
    <name evidence="5" type="primary">Lrrc34</name>
    <name evidence="3" type="synonym">Spata34</name>
</gene>
<organism>
    <name type="scientific">Mus musculus</name>
    <name type="common">Mouse</name>
    <dbReference type="NCBI Taxonomy" id="10090"/>
    <lineage>
        <taxon>Eukaryota</taxon>
        <taxon>Metazoa</taxon>
        <taxon>Chordata</taxon>
        <taxon>Craniata</taxon>
        <taxon>Vertebrata</taxon>
        <taxon>Euteleostomi</taxon>
        <taxon>Mammalia</taxon>
        <taxon>Eutheria</taxon>
        <taxon>Euarchontoglires</taxon>
        <taxon>Glires</taxon>
        <taxon>Rodentia</taxon>
        <taxon>Myomorpha</taxon>
        <taxon>Muroidea</taxon>
        <taxon>Muridae</taxon>
        <taxon>Murinae</taxon>
        <taxon>Mus</taxon>
        <taxon>Mus</taxon>
    </lineage>
</organism>
<feature type="chain" id="PRO_0000228670" description="Leucine-rich repeat-containing protein 34">
    <location>
        <begin position="1"/>
        <end position="415"/>
    </location>
</feature>
<feature type="repeat" description="LRR 1">
    <location>
        <begin position="246"/>
        <end position="272"/>
    </location>
</feature>
<feature type="repeat" description="LRR 2">
    <location>
        <begin position="274"/>
        <end position="296"/>
    </location>
</feature>
<evidence type="ECO:0000269" key="1">
    <source>
    </source>
</evidence>
<evidence type="ECO:0000269" key="2">
    <source>
    </source>
</evidence>
<evidence type="ECO:0000303" key="3">
    <source>
    </source>
</evidence>
<evidence type="ECO:0000312" key="4">
    <source>
        <dbReference type="EMBL" id="AEI83866.1"/>
    </source>
</evidence>
<evidence type="ECO:0000312" key="5">
    <source>
        <dbReference type="MGI" id="MGI:1919077"/>
    </source>
</evidence>
<keyword id="KW-0963">Cytoplasm</keyword>
<keyword id="KW-0221">Differentiation</keyword>
<keyword id="KW-0433">Leucine-rich repeat</keyword>
<keyword id="KW-0539">Nucleus</keyword>
<keyword id="KW-1185">Reference proteome</keyword>
<keyword id="KW-0677">Repeat</keyword>
<comment type="function">
    <text evidence="2">Highly expressed in stem cells where it may be involved in regulation of pluripotency. In embryonic stem cells (ESCs), important for normal expression of the pluripotency regulators POU5F1/OCT4 and KLF4. Also important for expression of the ectodermal marker gene NES and the endodermal marker gene GATA4. Promotes stem cell proliferation in vitro.</text>
</comment>
<comment type="subunit">
    <text evidence="2">Interacts with NPM1 and NCL.</text>
</comment>
<comment type="subcellular location">
    <subcellularLocation>
        <location evidence="1 2">Nucleus</location>
    </subcellularLocation>
    <subcellularLocation>
        <location evidence="2">Nucleus</location>
        <location evidence="2">Nucleolus</location>
    </subcellularLocation>
    <subcellularLocation>
        <location evidence="1 2">Cytoplasm</location>
    </subcellularLocation>
    <text evidence="2">As stem cells differentiate, translocates from the nucleolus to the nucleus and then to the cytoplasm. Colocalizes with NPM1 and NCL in the nucleolus.</text>
</comment>
<comment type="tissue specificity">
    <text evidence="1 2">Expressed in testis where it specifically localizes to germ cells (at protein level) (PubMed:24435972, PubMed:24991885). Not detected in other tissues tested (at protein level) (PubMed:24435972, PubMed:24991885). Expressed in pluripotent embryonic stem cells and multipotent adult germline stem cells (PubMed:24991885).</text>
</comment>
<comment type="developmental stage">
    <text evidence="2">Detected in unfertilized oocytes; expression continues in preimplantation embryos though to the blastula stage (at protein level) (PubMed:24991885). In testis, detected in very early spermatogonial germ cells with expression continuing through to the elongated spermatid stage (at protein level) (PubMed:24435972, PubMed:24991885). Weakly expressed in spermatozoa (at protein level) (PubMed:24435972). Not detected in spermatozoa (at protein level) (PubMed:24991885).</text>
</comment>
<name>LRC34_MOUSE</name>
<dbReference type="EMBL" id="JF934738">
    <property type="protein sequence ID" value="AEI83866.1"/>
    <property type="molecule type" value="mRNA"/>
</dbReference>
<dbReference type="EMBL" id="AK005720">
    <property type="protein sequence ID" value="BAB24205.1"/>
    <property type="molecule type" value="mRNA"/>
</dbReference>
<dbReference type="EMBL" id="CH466530">
    <property type="protein sequence ID" value="EDL34963.1"/>
    <property type="molecule type" value="Genomic_DNA"/>
</dbReference>
<dbReference type="EMBL" id="BC100519">
    <property type="protein sequence ID" value="AAI00520.1"/>
    <property type="molecule type" value="mRNA"/>
</dbReference>
<dbReference type="EMBL" id="BC116419">
    <property type="protein sequence ID" value="AAI16420.1"/>
    <property type="molecule type" value="mRNA"/>
</dbReference>
<dbReference type="EMBL" id="BC116420">
    <property type="protein sequence ID" value="AAI16421.1"/>
    <property type="molecule type" value="mRNA"/>
</dbReference>
<dbReference type="CCDS" id="CCDS38405.1"/>
<dbReference type="RefSeq" id="NP_082217.1">
    <property type="nucleotide sequence ID" value="NM_027941.1"/>
</dbReference>
<dbReference type="SMR" id="Q9DAM1"/>
<dbReference type="FunCoup" id="Q9DAM1">
    <property type="interactions" value="8"/>
</dbReference>
<dbReference type="STRING" id="10090.ENSMUSP00000029252"/>
<dbReference type="iPTMnet" id="Q9DAM1"/>
<dbReference type="PhosphoSitePlus" id="Q9DAM1"/>
<dbReference type="SwissPalm" id="Q9DAM1"/>
<dbReference type="PaxDb" id="10090-ENSMUSP00000029252"/>
<dbReference type="ProteomicsDB" id="252505"/>
<dbReference type="Antibodypedia" id="50951">
    <property type="antibodies" value="75 antibodies from 18 providers"/>
</dbReference>
<dbReference type="Ensembl" id="ENSMUST00000029252.8">
    <property type="protein sequence ID" value="ENSMUSP00000029252.8"/>
    <property type="gene ID" value="ENSMUSG00000027702.8"/>
</dbReference>
<dbReference type="GeneID" id="71827"/>
<dbReference type="KEGG" id="mmu:71827"/>
<dbReference type="UCSC" id="uc008ovb.1">
    <property type="organism name" value="mouse"/>
</dbReference>
<dbReference type="AGR" id="MGI:1919077"/>
<dbReference type="CTD" id="151827"/>
<dbReference type="MGI" id="MGI:1919077">
    <property type="gene designation" value="Lrrc34"/>
</dbReference>
<dbReference type="VEuPathDB" id="HostDB:ENSMUSG00000027702"/>
<dbReference type="eggNOG" id="KOG4308">
    <property type="taxonomic scope" value="Eukaryota"/>
</dbReference>
<dbReference type="GeneTree" id="ENSGT00940000156456"/>
<dbReference type="HOGENOM" id="CLU_017147_1_0_1"/>
<dbReference type="InParanoid" id="Q9DAM1"/>
<dbReference type="OMA" id="IKNCGMK"/>
<dbReference type="OrthoDB" id="272549at2759"/>
<dbReference type="PhylomeDB" id="Q9DAM1"/>
<dbReference type="TreeFam" id="TF329653"/>
<dbReference type="BioGRID-ORCS" id="71827">
    <property type="hits" value="3 hits in 78 CRISPR screens"/>
</dbReference>
<dbReference type="PRO" id="PR:Q9DAM1"/>
<dbReference type="Proteomes" id="UP000000589">
    <property type="component" value="Chromosome 3"/>
</dbReference>
<dbReference type="RNAct" id="Q9DAM1">
    <property type="molecule type" value="protein"/>
</dbReference>
<dbReference type="Bgee" id="ENSMUSG00000027702">
    <property type="expression patterns" value="Expressed in spermatid and 82 other cell types or tissues"/>
</dbReference>
<dbReference type="GO" id="GO:0005737">
    <property type="term" value="C:cytoplasm"/>
    <property type="evidence" value="ECO:0007669"/>
    <property type="project" value="UniProtKB-SubCell"/>
</dbReference>
<dbReference type="GO" id="GO:0005730">
    <property type="term" value="C:nucleolus"/>
    <property type="evidence" value="ECO:0007669"/>
    <property type="project" value="UniProtKB-SubCell"/>
</dbReference>
<dbReference type="GO" id="GO:0030154">
    <property type="term" value="P:cell differentiation"/>
    <property type="evidence" value="ECO:0007669"/>
    <property type="project" value="UniProtKB-KW"/>
</dbReference>
<dbReference type="GO" id="GO:0010467">
    <property type="term" value="P:gene expression"/>
    <property type="evidence" value="ECO:0000315"/>
    <property type="project" value="MGI"/>
</dbReference>
<dbReference type="GO" id="GO:0000723">
    <property type="term" value="P:telomere maintenance"/>
    <property type="evidence" value="ECO:0000315"/>
    <property type="project" value="MGI"/>
</dbReference>
<dbReference type="Gene3D" id="3.80.10.10">
    <property type="entry name" value="Ribonuclease Inhibitor"/>
    <property type="match status" value="2"/>
</dbReference>
<dbReference type="InterPro" id="IPR001611">
    <property type="entry name" value="Leu-rich_rpt"/>
</dbReference>
<dbReference type="InterPro" id="IPR052201">
    <property type="entry name" value="LRR-containing_regulator"/>
</dbReference>
<dbReference type="InterPro" id="IPR032675">
    <property type="entry name" value="LRR_dom_sf"/>
</dbReference>
<dbReference type="PANTHER" id="PTHR24111">
    <property type="entry name" value="LEUCINE-RICH REPEAT-CONTAINING PROTEIN 34"/>
    <property type="match status" value="1"/>
</dbReference>
<dbReference type="PANTHER" id="PTHR24111:SF4">
    <property type="entry name" value="LEUCINE-RICH REPEAT-CONTAINING PROTEIN 34"/>
    <property type="match status" value="1"/>
</dbReference>
<dbReference type="Pfam" id="PF13516">
    <property type="entry name" value="LRR_6"/>
    <property type="match status" value="6"/>
</dbReference>
<dbReference type="SMART" id="SM00368">
    <property type="entry name" value="LRR_RI"/>
    <property type="match status" value="8"/>
</dbReference>
<dbReference type="SUPFAM" id="SSF52047">
    <property type="entry name" value="RNI-like"/>
    <property type="match status" value="1"/>
</dbReference>
<protein>
    <recommendedName>
        <fullName>Leucine-rich repeat-containing protein 34</fullName>
    </recommendedName>
</protein>
<proteinExistence type="evidence at protein level"/>
<sequence>MEKLQAQYCYLCSENIRKTNPFILNILQKLDEEIEKRPKEKFTVNIAGNNRLDSGQRITGEDFWLLSKTLRNQPCISGVDVRYNLIGDVGAFYAAKLLQKQPSITYLNLMFNDIGPEGGELIAKALHKNKTLKYLRMTGNKIENTGGMLFAAMLQMNSSLEKLDLGDCDLGLQCVIAFSTVLTQNQAIKGINLNRPILYGEQEESTVHIGHMLKENHVLVELHMCKHGMKNYGLQQLCNALYLNSSLRYLDVSCNKITRDGMVFLADVLKSNTTLEVLDLSFNRIETAGAKYLSETLTSHNRSLKALSVVSNKIEGEGLVALSQSMKTNLVLSNIYIWGNKFDEDTCVAYSDLIKSGRLKPDNTDVEPYMVDEHIYLSEVSNGLKRHYYWAPTYGETYMPSSSAGFALVPVGEHL</sequence>